<evidence type="ECO:0000255" key="1">
    <source>
        <dbReference type="HAMAP-Rule" id="MF_00320"/>
    </source>
</evidence>
<reference key="1">
    <citation type="journal article" date="1999" name="DNA Res.">
        <title>Complete genome sequence of an aerobic hyper-thermophilic crenarchaeon, Aeropyrum pernix K1.</title>
        <authorList>
            <person name="Kawarabayasi Y."/>
            <person name="Hino Y."/>
            <person name="Horikawa H."/>
            <person name="Yamazaki S."/>
            <person name="Haikawa Y."/>
            <person name="Jin-no K."/>
            <person name="Takahashi M."/>
            <person name="Sekine M."/>
            <person name="Baba S."/>
            <person name="Ankai A."/>
            <person name="Kosugi H."/>
            <person name="Hosoyama A."/>
            <person name="Fukui S."/>
            <person name="Nagai Y."/>
            <person name="Nishijima K."/>
            <person name="Nakazawa H."/>
            <person name="Takamiya M."/>
            <person name="Masuda S."/>
            <person name="Funahashi T."/>
            <person name="Tanaka T."/>
            <person name="Kudoh Y."/>
            <person name="Yamazaki J."/>
            <person name="Kushida N."/>
            <person name="Oguchi A."/>
            <person name="Aoki K."/>
            <person name="Kubota K."/>
            <person name="Nakamura Y."/>
            <person name="Nomura N."/>
            <person name="Sako Y."/>
            <person name="Kikuchi H."/>
        </authorList>
    </citation>
    <scope>NUCLEOTIDE SEQUENCE [LARGE SCALE GENOMIC DNA]</scope>
    <source>
        <strain>ATCC 700893 / DSM 11879 / JCM 9820 / NBRC 100138 / K1</strain>
    </source>
</reference>
<feature type="chain" id="PRO_0000132750" description="DNA-directed RNA polymerase subunit Rpo3">
    <location>
        <begin position="1"/>
        <end position="286"/>
    </location>
</feature>
<gene>
    <name evidence="1" type="primary">rpo3</name>
    <name evidence="1" type="synonym">rpoD</name>
    <name type="ordered locus">APE_1744.1</name>
</gene>
<accession>Q9YB53</accession>
<name>RPO3_AERPE</name>
<organism>
    <name type="scientific">Aeropyrum pernix (strain ATCC 700893 / DSM 11879 / JCM 9820 / NBRC 100138 / K1)</name>
    <dbReference type="NCBI Taxonomy" id="272557"/>
    <lineage>
        <taxon>Archaea</taxon>
        <taxon>Thermoproteota</taxon>
        <taxon>Thermoprotei</taxon>
        <taxon>Desulfurococcales</taxon>
        <taxon>Desulfurococcaceae</taxon>
        <taxon>Aeropyrum</taxon>
    </lineage>
</organism>
<comment type="function">
    <text evidence="1">DNA-dependent RNA polymerase (RNAP) catalyzes the transcription of DNA into RNA using the four ribonucleoside triphosphates as substrates.</text>
</comment>
<comment type="catalytic activity">
    <reaction evidence="1">
        <text>RNA(n) + a ribonucleoside 5'-triphosphate = RNA(n+1) + diphosphate</text>
        <dbReference type="Rhea" id="RHEA:21248"/>
        <dbReference type="Rhea" id="RHEA-COMP:14527"/>
        <dbReference type="Rhea" id="RHEA-COMP:17342"/>
        <dbReference type="ChEBI" id="CHEBI:33019"/>
        <dbReference type="ChEBI" id="CHEBI:61557"/>
        <dbReference type="ChEBI" id="CHEBI:140395"/>
        <dbReference type="EC" id="2.7.7.6"/>
    </reaction>
</comment>
<comment type="subunit">
    <text evidence="1">Part of the RNA polymerase complex.</text>
</comment>
<comment type="subcellular location">
    <subcellularLocation>
        <location evidence="1">Cytoplasm</location>
    </subcellularLocation>
</comment>
<comment type="similarity">
    <text evidence="1">Belongs to the archaeal Rpo3/eukaryotic RPB3 RNA polymerase subunit family.</text>
</comment>
<proteinExistence type="inferred from homology"/>
<protein>
    <recommendedName>
        <fullName evidence="1">DNA-directed RNA polymerase subunit Rpo3</fullName>
        <ecNumber evidence="1">2.7.7.6</ecNumber>
    </recommendedName>
    <alternativeName>
        <fullName evidence="1">DNA-directed RNA polymerase subunit D</fullName>
    </alternativeName>
</protein>
<keyword id="KW-0963">Cytoplasm</keyword>
<keyword id="KW-0240">DNA-directed RNA polymerase</keyword>
<keyword id="KW-0548">Nucleotidyltransferase</keyword>
<keyword id="KW-1185">Reference proteome</keyword>
<keyword id="KW-0804">Transcription</keyword>
<keyword id="KW-0808">Transferase</keyword>
<dbReference type="EC" id="2.7.7.6" evidence="1"/>
<dbReference type="EMBL" id="BA000002">
    <property type="protein sequence ID" value="BAA80745.2"/>
    <property type="molecule type" value="Genomic_DNA"/>
</dbReference>
<dbReference type="PIR" id="D72557">
    <property type="entry name" value="D72557"/>
</dbReference>
<dbReference type="SMR" id="Q9YB53"/>
<dbReference type="STRING" id="272557.APE_1744.1"/>
<dbReference type="EnsemblBacteria" id="BAA80745">
    <property type="protein sequence ID" value="BAA80745"/>
    <property type="gene ID" value="APE_1744.1"/>
</dbReference>
<dbReference type="KEGG" id="ape:APE_1744.1"/>
<dbReference type="PATRIC" id="fig|272557.25.peg.1172"/>
<dbReference type="eggNOG" id="arCOG04241">
    <property type="taxonomic scope" value="Archaea"/>
</dbReference>
<dbReference type="Proteomes" id="UP000002518">
    <property type="component" value="Chromosome"/>
</dbReference>
<dbReference type="GO" id="GO:0005737">
    <property type="term" value="C:cytoplasm"/>
    <property type="evidence" value="ECO:0007669"/>
    <property type="project" value="UniProtKB-SubCell"/>
</dbReference>
<dbReference type="GO" id="GO:0000428">
    <property type="term" value="C:DNA-directed RNA polymerase complex"/>
    <property type="evidence" value="ECO:0007669"/>
    <property type="project" value="UniProtKB-KW"/>
</dbReference>
<dbReference type="GO" id="GO:0003677">
    <property type="term" value="F:DNA binding"/>
    <property type="evidence" value="ECO:0007669"/>
    <property type="project" value="UniProtKB-UniRule"/>
</dbReference>
<dbReference type="GO" id="GO:0003899">
    <property type="term" value="F:DNA-directed RNA polymerase activity"/>
    <property type="evidence" value="ECO:0007669"/>
    <property type="project" value="UniProtKB-UniRule"/>
</dbReference>
<dbReference type="GO" id="GO:0046983">
    <property type="term" value="F:protein dimerization activity"/>
    <property type="evidence" value="ECO:0007669"/>
    <property type="project" value="InterPro"/>
</dbReference>
<dbReference type="GO" id="GO:0006351">
    <property type="term" value="P:DNA-templated transcription"/>
    <property type="evidence" value="ECO:0007669"/>
    <property type="project" value="UniProtKB-UniRule"/>
</dbReference>
<dbReference type="CDD" id="cd07030">
    <property type="entry name" value="RNAP_D"/>
    <property type="match status" value="1"/>
</dbReference>
<dbReference type="Gene3D" id="3.30.70.20">
    <property type="match status" value="1"/>
</dbReference>
<dbReference type="Gene3D" id="2.170.120.12">
    <property type="entry name" value="DNA-directed RNA polymerase, insert domain"/>
    <property type="match status" value="1"/>
</dbReference>
<dbReference type="Gene3D" id="3.30.1360.10">
    <property type="entry name" value="RNA polymerase, RBP11-like subunit"/>
    <property type="match status" value="1"/>
</dbReference>
<dbReference type="HAMAP" id="MF_00320">
    <property type="entry name" value="RNApol_arch_Rpo3"/>
    <property type="match status" value="1"/>
</dbReference>
<dbReference type="InterPro" id="IPR001514">
    <property type="entry name" value="DNA-dir_RNA_pol_30-40kDasu_CS"/>
</dbReference>
<dbReference type="InterPro" id="IPR011262">
    <property type="entry name" value="DNA-dir_RNA_pol_insert"/>
</dbReference>
<dbReference type="InterPro" id="IPR011263">
    <property type="entry name" value="DNA-dir_RNA_pol_RpoA/D/Rpb3"/>
</dbReference>
<dbReference type="InterPro" id="IPR036603">
    <property type="entry name" value="RBP11-like"/>
</dbReference>
<dbReference type="InterPro" id="IPR022842">
    <property type="entry name" value="RNAP_Rpo3/Rpb3/RPAC1"/>
</dbReference>
<dbReference type="InterPro" id="IPR036643">
    <property type="entry name" value="RNApol_insert_sf"/>
</dbReference>
<dbReference type="InterPro" id="IPR050518">
    <property type="entry name" value="Rpo3/RPB3_RNA_Pol_subunit"/>
</dbReference>
<dbReference type="NCBIfam" id="NF001988">
    <property type="entry name" value="PRK00783.1"/>
    <property type="match status" value="1"/>
</dbReference>
<dbReference type="PANTHER" id="PTHR11800">
    <property type="entry name" value="DNA-DIRECTED RNA POLYMERASE"/>
    <property type="match status" value="1"/>
</dbReference>
<dbReference type="PANTHER" id="PTHR11800:SF2">
    <property type="entry name" value="DNA-DIRECTED RNA POLYMERASE II SUBUNIT RPB3"/>
    <property type="match status" value="1"/>
</dbReference>
<dbReference type="Pfam" id="PF01000">
    <property type="entry name" value="RNA_pol_A_bac"/>
    <property type="match status" value="1"/>
</dbReference>
<dbReference type="Pfam" id="PF01193">
    <property type="entry name" value="RNA_pol_L"/>
    <property type="match status" value="1"/>
</dbReference>
<dbReference type="SMART" id="SM00662">
    <property type="entry name" value="RPOLD"/>
    <property type="match status" value="1"/>
</dbReference>
<dbReference type="SUPFAM" id="SSF56553">
    <property type="entry name" value="Insert subdomain of RNA polymerase alpha subunit"/>
    <property type="match status" value="1"/>
</dbReference>
<dbReference type="SUPFAM" id="SSF55257">
    <property type="entry name" value="RBP11-like subunits of RNA polymerase"/>
    <property type="match status" value="1"/>
</dbReference>
<dbReference type="PROSITE" id="PS00446">
    <property type="entry name" value="RNA_POL_D_30KD"/>
    <property type="match status" value="1"/>
</dbReference>
<sequence>MAETGDRSVEVVELDSLRVRLRIRGYPVVFVNAIRRTVLSDVPTMAVDYAYIFDNTTAVYDEMVAHRLGLVVLDSNEAVEKYRRPEECAGKEPSEEDCFVEVSLEAEVDAEGETGRYITAGDLSISDPQVKPVYPETPLIYVAPGQRIHVQAFARLGRGKEHTKWSPASLSVLRYTPILIYDSSKAGDECLECLSAYPQVVEALKSGGKGSLVLEGLRRTSGLRYCAETACRGAVEVRYDSSNLDLEVESTGALRPEKIVELAIRELEEKVKRFAEAVESVGVEES</sequence>